<name>NDUB7_PANTR</name>
<organism>
    <name type="scientific">Pan troglodytes</name>
    <name type="common">Chimpanzee</name>
    <dbReference type="NCBI Taxonomy" id="9598"/>
    <lineage>
        <taxon>Eukaryota</taxon>
        <taxon>Metazoa</taxon>
        <taxon>Chordata</taxon>
        <taxon>Craniata</taxon>
        <taxon>Vertebrata</taxon>
        <taxon>Euteleostomi</taxon>
        <taxon>Mammalia</taxon>
        <taxon>Eutheria</taxon>
        <taxon>Euarchontoglires</taxon>
        <taxon>Primates</taxon>
        <taxon>Haplorrhini</taxon>
        <taxon>Catarrhini</taxon>
        <taxon>Hominidae</taxon>
        <taxon>Pan</taxon>
    </lineage>
</organism>
<proteinExistence type="evidence at transcript level"/>
<gene>
    <name type="primary">NDUFB7</name>
</gene>
<accession>Q0MQE4</accession>
<dbReference type="EMBL" id="DQ885690">
    <property type="protein sequence ID" value="ABH12199.1"/>
    <property type="molecule type" value="mRNA"/>
</dbReference>
<dbReference type="RefSeq" id="NP_001065270.1">
    <property type="nucleotide sequence ID" value="NM_001071802.1"/>
</dbReference>
<dbReference type="STRING" id="9598.ENSPTRP00000018081"/>
<dbReference type="PaxDb" id="9598-ENSPTRP00000018081"/>
<dbReference type="GeneID" id="468748"/>
<dbReference type="KEGG" id="ptr:468748"/>
<dbReference type="CTD" id="4713"/>
<dbReference type="eggNOG" id="KOG3468">
    <property type="taxonomic scope" value="Eukaryota"/>
</dbReference>
<dbReference type="InParanoid" id="Q0MQE4"/>
<dbReference type="OrthoDB" id="17271at9604"/>
<dbReference type="Proteomes" id="UP000002277">
    <property type="component" value="Unplaced"/>
</dbReference>
<dbReference type="GO" id="GO:0005743">
    <property type="term" value="C:mitochondrial inner membrane"/>
    <property type="evidence" value="ECO:0007669"/>
    <property type="project" value="UniProtKB-SubCell"/>
</dbReference>
<dbReference type="GO" id="GO:0005758">
    <property type="term" value="C:mitochondrial intermembrane space"/>
    <property type="evidence" value="ECO:0007669"/>
    <property type="project" value="UniProtKB-SubCell"/>
</dbReference>
<dbReference type="GO" id="GO:0045271">
    <property type="term" value="C:respiratory chain complex I"/>
    <property type="evidence" value="ECO:0000250"/>
    <property type="project" value="UniProtKB"/>
</dbReference>
<dbReference type="GO" id="GO:0008137">
    <property type="term" value="F:NADH dehydrogenase (ubiquinone) activity"/>
    <property type="evidence" value="ECO:0000250"/>
    <property type="project" value="UniProtKB"/>
</dbReference>
<dbReference type="InterPro" id="IPR008698">
    <property type="entry name" value="NDUB7"/>
</dbReference>
<dbReference type="PANTHER" id="PTHR20900:SF0">
    <property type="entry name" value="NADH DEHYDROGENASE [UBIQUINONE] 1 BETA SUBCOMPLEX SUBUNIT 7"/>
    <property type="match status" value="1"/>
</dbReference>
<dbReference type="PANTHER" id="PTHR20900">
    <property type="entry name" value="NADH:UBIQUINONE OXIDOREDUCTASE B18-LIKE SUBUNIT"/>
    <property type="match status" value="1"/>
</dbReference>
<dbReference type="Pfam" id="PF05676">
    <property type="entry name" value="NDUF_B7"/>
    <property type="match status" value="1"/>
</dbReference>
<dbReference type="PROSITE" id="PS51808">
    <property type="entry name" value="CHCH"/>
    <property type="match status" value="1"/>
</dbReference>
<feature type="initiator methionine" description="Removed">
    <location>
        <position position="1"/>
    </location>
</feature>
<feature type="chain" id="PRO_0000251839" description="NADH dehydrogenase [ubiquinone] 1 beta subcomplex subunit 7">
    <location>
        <begin position="2"/>
        <end position="137"/>
    </location>
</feature>
<feature type="domain" description="CHCH" evidence="4">
    <location>
        <begin position="56"/>
        <end position="98"/>
    </location>
</feature>
<feature type="region of interest" description="Disordered" evidence="5">
    <location>
        <begin position="113"/>
        <end position="137"/>
    </location>
</feature>
<feature type="short sequence motif" description="Cx9C motif 1" evidence="4">
    <location>
        <begin position="59"/>
        <end position="69"/>
    </location>
</feature>
<feature type="short sequence motif" description="Cx9C motif 2" evidence="4">
    <location>
        <begin position="80"/>
        <end position="90"/>
    </location>
</feature>
<feature type="modified residue" description="Phosphoserine" evidence="3">
    <location>
        <position position="73"/>
    </location>
</feature>
<feature type="lipid moiety-binding region" description="N-myristoyl glycine" evidence="1">
    <location>
        <position position="2"/>
    </location>
</feature>
<feature type="disulfide bond" evidence="4">
    <location>
        <begin position="59"/>
        <end position="90"/>
    </location>
</feature>
<feature type="disulfide bond" evidence="4">
    <location>
        <begin position="69"/>
        <end position="80"/>
    </location>
</feature>
<protein>
    <recommendedName>
        <fullName>NADH dehydrogenase [ubiquinone] 1 beta subcomplex subunit 7</fullName>
    </recommendedName>
    <alternativeName>
        <fullName>Complex I-B18</fullName>
        <shortName>CI-B18</shortName>
    </alternativeName>
    <alternativeName>
        <fullName>NADH-ubiquinone oxidoreductase B18 subunit</fullName>
    </alternativeName>
</protein>
<comment type="function">
    <text evidence="2">Accessory subunit of the mitochondrial membrane respiratory chain NADH dehydrogenase (Complex I), that is believed not to be involved in catalysis. Complex I functions in the transfer of electrons from NADH to the respiratory chain. The immediate electron acceptor for the enzyme is believed to be ubiquinone.</text>
</comment>
<comment type="subunit">
    <text evidence="2">Complex I is composed of 45 different subunits.</text>
</comment>
<comment type="subcellular location">
    <subcellularLocation>
        <location evidence="2">Mitochondrion inner membrane</location>
        <topology evidence="2">Peripheral membrane protein</topology>
    </subcellularLocation>
    <subcellularLocation>
        <location evidence="2">Mitochondrion intermembrane space</location>
    </subcellularLocation>
</comment>
<comment type="domain">
    <text evidence="2">Contains two C-X9-C motifs that are predicted to form a helix-coil-helix structure, permitting the formation of intramolecular disulfide bonds.</text>
</comment>
<comment type="similarity">
    <text evidence="6">Belongs to the complex I NDUFB7 subunit family.</text>
</comment>
<keyword id="KW-1015">Disulfide bond</keyword>
<keyword id="KW-0249">Electron transport</keyword>
<keyword id="KW-0449">Lipoprotein</keyword>
<keyword id="KW-0472">Membrane</keyword>
<keyword id="KW-0496">Mitochondrion</keyword>
<keyword id="KW-0999">Mitochondrion inner membrane</keyword>
<keyword id="KW-0519">Myristate</keyword>
<keyword id="KW-0597">Phosphoprotein</keyword>
<keyword id="KW-1185">Reference proteome</keyword>
<keyword id="KW-0679">Respiratory chain</keyword>
<keyword id="KW-0813">Transport</keyword>
<sequence>MGAHLVRRYLGDASVEPDPLQMPTFPPDYGFPERKEREMVATQQEMMDAQLRLQLRDYCAHYLIRLLKCKRDSFPNFXACKQERHDWDYCEHRDYVMRMKEFERERRLLQRKKRREKKAAELAKGQGPGEVDPKVAL</sequence>
<reference key="1">
    <citation type="journal article" date="2006" name="Gene">
        <title>Adaptive selection of mitochondrial complex I subunits during primate radiation.</title>
        <authorList>
            <person name="Mishmar D."/>
            <person name="Ruiz-Pesini E."/>
            <person name="Mondragon-Palomino M."/>
            <person name="Procaccio V."/>
            <person name="Gaut B."/>
            <person name="Wallace D.C."/>
        </authorList>
    </citation>
    <scope>NUCLEOTIDE SEQUENCE [MRNA]</scope>
</reference>
<evidence type="ECO:0000250" key="1"/>
<evidence type="ECO:0000250" key="2">
    <source>
        <dbReference type="UniProtKB" id="P17568"/>
    </source>
</evidence>
<evidence type="ECO:0000250" key="3">
    <source>
        <dbReference type="UniProtKB" id="Q9CR61"/>
    </source>
</evidence>
<evidence type="ECO:0000255" key="4">
    <source>
        <dbReference type="PROSITE-ProRule" id="PRU01150"/>
    </source>
</evidence>
<evidence type="ECO:0000256" key="5">
    <source>
        <dbReference type="SAM" id="MobiDB-lite"/>
    </source>
</evidence>
<evidence type="ECO:0000305" key="6"/>